<comment type="function">
    <text evidence="1">Cell wall formation. Catalyzes the addition of glutamate to the nucleotide precursor UDP-N-acetylmuramoyl-L-alanine (UMA).</text>
</comment>
<comment type="catalytic activity">
    <reaction evidence="1">
        <text>UDP-N-acetyl-alpha-D-muramoyl-L-alanine + D-glutamate + ATP = UDP-N-acetyl-alpha-D-muramoyl-L-alanyl-D-glutamate + ADP + phosphate + H(+)</text>
        <dbReference type="Rhea" id="RHEA:16429"/>
        <dbReference type="ChEBI" id="CHEBI:15378"/>
        <dbReference type="ChEBI" id="CHEBI:29986"/>
        <dbReference type="ChEBI" id="CHEBI:30616"/>
        <dbReference type="ChEBI" id="CHEBI:43474"/>
        <dbReference type="ChEBI" id="CHEBI:83898"/>
        <dbReference type="ChEBI" id="CHEBI:83900"/>
        <dbReference type="ChEBI" id="CHEBI:456216"/>
        <dbReference type="EC" id="6.3.2.9"/>
    </reaction>
</comment>
<comment type="pathway">
    <text evidence="1">Cell wall biogenesis; peptidoglycan biosynthesis.</text>
</comment>
<comment type="subcellular location">
    <subcellularLocation>
        <location evidence="1">Cytoplasm</location>
    </subcellularLocation>
</comment>
<comment type="similarity">
    <text evidence="1">Belongs to the MurCDEF family.</text>
</comment>
<name>MURD_LACP7</name>
<gene>
    <name evidence="1" type="primary">murD</name>
    <name type="ordered locus">Cphy_2475</name>
</gene>
<organism>
    <name type="scientific">Lachnoclostridium phytofermentans (strain ATCC 700394 / DSM 18823 / ISDg)</name>
    <name type="common">Clostridium phytofermentans</name>
    <dbReference type="NCBI Taxonomy" id="357809"/>
    <lineage>
        <taxon>Bacteria</taxon>
        <taxon>Bacillati</taxon>
        <taxon>Bacillota</taxon>
        <taxon>Clostridia</taxon>
        <taxon>Lachnospirales</taxon>
        <taxon>Lachnospiraceae</taxon>
    </lineage>
</organism>
<sequence length="454" mass="50537">MNFLGKKVLVVGAGKSGISAIELLSQEGAQTILYDANEEINKEEISKKLPIDYKGDIILGGLSSELKSELDVVVLSPGVPTDLDYVKELKSAEIPIIGEVELAYNFSKGKIAAITGTNGKTSTTTLVGEIMKTYYKSVFVVGNIGVPYTQMVKNTENDSVTVAEMSSFQLETIETFRPDVSAILNITPDHLNRHHTMEAYIEAKVNITKNQTKEDTCILNYEDSYLRTVSGRIPATILWFSSVRELERGLFLRENHIIYRDDEKECVVCDVNELQIIGKHNYENVMAAVGIAIALKVPMDFIREAVTKFRGVEHRIEYVTTKRGVKYYNDSKGTNPDASIQAIKAMQTKTLLIGGGYDKDSDYDDWIKAFDDKVTYLVLLGQTREKIANAAKRLGVKNIVLVDSLSEAVDFCAEHAGVGETVLLSPCCASWGMFKDYEERGMLFKEYVHALKDE</sequence>
<reference key="1">
    <citation type="submission" date="2007-11" db="EMBL/GenBank/DDBJ databases">
        <title>Complete genome sequence of Clostridium phytofermentans ISDg.</title>
        <authorList>
            <person name="Leschine S.B."/>
            <person name="Warnick T.A."/>
            <person name="Blanchard J.L."/>
            <person name="Schnell D.J."/>
            <person name="Petit E.L."/>
            <person name="LaTouf W.G."/>
            <person name="Copeland A."/>
            <person name="Lucas S."/>
            <person name="Lapidus A."/>
            <person name="Barry K."/>
            <person name="Glavina del Rio T."/>
            <person name="Dalin E."/>
            <person name="Tice H."/>
            <person name="Pitluck S."/>
            <person name="Kiss H."/>
            <person name="Brettin T."/>
            <person name="Bruce D."/>
            <person name="Detter J.C."/>
            <person name="Han C."/>
            <person name="Kuske C."/>
            <person name="Schmutz J."/>
            <person name="Larimer F."/>
            <person name="Land M."/>
            <person name="Hauser L."/>
            <person name="Kyrpides N."/>
            <person name="Kim E.A."/>
            <person name="Richardson P."/>
        </authorList>
    </citation>
    <scope>NUCLEOTIDE SEQUENCE [LARGE SCALE GENOMIC DNA]</scope>
    <source>
        <strain>ATCC 700394 / DSM 18823 / ISDg</strain>
    </source>
</reference>
<feature type="chain" id="PRO_1000082680" description="UDP-N-acetylmuramoylalanine--D-glutamate ligase">
    <location>
        <begin position="1"/>
        <end position="454"/>
    </location>
</feature>
<feature type="binding site" evidence="1">
    <location>
        <begin position="116"/>
        <end position="122"/>
    </location>
    <ligand>
        <name>ATP</name>
        <dbReference type="ChEBI" id="CHEBI:30616"/>
    </ligand>
</feature>
<proteinExistence type="inferred from homology"/>
<keyword id="KW-0067">ATP-binding</keyword>
<keyword id="KW-0131">Cell cycle</keyword>
<keyword id="KW-0132">Cell division</keyword>
<keyword id="KW-0133">Cell shape</keyword>
<keyword id="KW-0961">Cell wall biogenesis/degradation</keyword>
<keyword id="KW-0963">Cytoplasm</keyword>
<keyword id="KW-0436">Ligase</keyword>
<keyword id="KW-0547">Nucleotide-binding</keyword>
<keyword id="KW-0573">Peptidoglycan synthesis</keyword>
<keyword id="KW-1185">Reference proteome</keyword>
<accession>A9KLU2</accession>
<dbReference type="EC" id="6.3.2.9" evidence="1"/>
<dbReference type="EMBL" id="CP000885">
    <property type="protein sequence ID" value="ABX42836.1"/>
    <property type="molecule type" value="Genomic_DNA"/>
</dbReference>
<dbReference type="RefSeq" id="WP_012200489.1">
    <property type="nucleotide sequence ID" value="NC_010001.1"/>
</dbReference>
<dbReference type="SMR" id="A9KLU2"/>
<dbReference type="STRING" id="357809.Cphy_2475"/>
<dbReference type="KEGG" id="cpy:Cphy_2475"/>
<dbReference type="eggNOG" id="COG0771">
    <property type="taxonomic scope" value="Bacteria"/>
</dbReference>
<dbReference type="HOGENOM" id="CLU_032540_0_0_9"/>
<dbReference type="OrthoDB" id="9809796at2"/>
<dbReference type="UniPathway" id="UPA00219"/>
<dbReference type="Proteomes" id="UP000000370">
    <property type="component" value="Chromosome"/>
</dbReference>
<dbReference type="GO" id="GO:0005737">
    <property type="term" value="C:cytoplasm"/>
    <property type="evidence" value="ECO:0007669"/>
    <property type="project" value="UniProtKB-SubCell"/>
</dbReference>
<dbReference type="GO" id="GO:0005524">
    <property type="term" value="F:ATP binding"/>
    <property type="evidence" value="ECO:0007669"/>
    <property type="project" value="UniProtKB-UniRule"/>
</dbReference>
<dbReference type="GO" id="GO:0008764">
    <property type="term" value="F:UDP-N-acetylmuramoylalanine-D-glutamate ligase activity"/>
    <property type="evidence" value="ECO:0007669"/>
    <property type="project" value="UniProtKB-UniRule"/>
</dbReference>
<dbReference type="GO" id="GO:0051301">
    <property type="term" value="P:cell division"/>
    <property type="evidence" value="ECO:0007669"/>
    <property type="project" value="UniProtKB-KW"/>
</dbReference>
<dbReference type="GO" id="GO:0071555">
    <property type="term" value="P:cell wall organization"/>
    <property type="evidence" value="ECO:0007669"/>
    <property type="project" value="UniProtKB-KW"/>
</dbReference>
<dbReference type="GO" id="GO:0009252">
    <property type="term" value="P:peptidoglycan biosynthetic process"/>
    <property type="evidence" value="ECO:0007669"/>
    <property type="project" value="UniProtKB-UniRule"/>
</dbReference>
<dbReference type="GO" id="GO:0008360">
    <property type="term" value="P:regulation of cell shape"/>
    <property type="evidence" value="ECO:0007669"/>
    <property type="project" value="UniProtKB-KW"/>
</dbReference>
<dbReference type="Gene3D" id="3.90.190.20">
    <property type="entry name" value="Mur ligase, C-terminal domain"/>
    <property type="match status" value="1"/>
</dbReference>
<dbReference type="Gene3D" id="3.40.1190.10">
    <property type="entry name" value="Mur-like, catalytic domain"/>
    <property type="match status" value="1"/>
</dbReference>
<dbReference type="Gene3D" id="3.40.50.720">
    <property type="entry name" value="NAD(P)-binding Rossmann-like Domain"/>
    <property type="match status" value="1"/>
</dbReference>
<dbReference type="HAMAP" id="MF_00639">
    <property type="entry name" value="MurD"/>
    <property type="match status" value="1"/>
</dbReference>
<dbReference type="InterPro" id="IPR036565">
    <property type="entry name" value="Mur-like_cat_sf"/>
</dbReference>
<dbReference type="InterPro" id="IPR004101">
    <property type="entry name" value="Mur_ligase_C"/>
</dbReference>
<dbReference type="InterPro" id="IPR036615">
    <property type="entry name" value="Mur_ligase_C_dom_sf"/>
</dbReference>
<dbReference type="InterPro" id="IPR013221">
    <property type="entry name" value="Mur_ligase_cen"/>
</dbReference>
<dbReference type="InterPro" id="IPR005762">
    <property type="entry name" value="MurD"/>
</dbReference>
<dbReference type="NCBIfam" id="TIGR01087">
    <property type="entry name" value="murD"/>
    <property type="match status" value="1"/>
</dbReference>
<dbReference type="PANTHER" id="PTHR43692">
    <property type="entry name" value="UDP-N-ACETYLMURAMOYLALANINE--D-GLUTAMATE LIGASE"/>
    <property type="match status" value="1"/>
</dbReference>
<dbReference type="PANTHER" id="PTHR43692:SF1">
    <property type="entry name" value="UDP-N-ACETYLMURAMOYLALANINE--D-GLUTAMATE LIGASE"/>
    <property type="match status" value="1"/>
</dbReference>
<dbReference type="Pfam" id="PF02875">
    <property type="entry name" value="Mur_ligase_C"/>
    <property type="match status" value="1"/>
</dbReference>
<dbReference type="Pfam" id="PF08245">
    <property type="entry name" value="Mur_ligase_M"/>
    <property type="match status" value="1"/>
</dbReference>
<dbReference type="Pfam" id="PF21799">
    <property type="entry name" value="MurD-like_N"/>
    <property type="match status" value="1"/>
</dbReference>
<dbReference type="SUPFAM" id="SSF51984">
    <property type="entry name" value="MurCD N-terminal domain"/>
    <property type="match status" value="1"/>
</dbReference>
<dbReference type="SUPFAM" id="SSF53623">
    <property type="entry name" value="MurD-like peptide ligases, catalytic domain"/>
    <property type="match status" value="1"/>
</dbReference>
<dbReference type="SUPFAM" id="SSF53244">
    <property type="entry name" value="MurD-like peptide ligases, peptide-binding domain"/>
    <property type="match status" value="1"/>
</dbReference>
<evidence type="ECO:0000255" key="1">
    <source>
        <dbReference type="HAMAP-Rule" id="MF_00639"/>
    </source>
</evidence>
<protein>
    <recommendedName>
        <fullName evidence="1">UDP-N-acetylmuramoylalanine--D-glutamate ligase</fullName>
        <ecNumber evidence="1">6.3.2.9</ecNumber>
    </recommendedName>
    <alternativeName>
        <fullName evidence="1">D-glutamic acid-adding enzyme</fullName>
    </alternativeName>
    <alternativeName>
        <fullName evidence="1">UDP-N-acetylmuramoyl-L-alanyl-D-glutamate synthetase</fullName>
    </alternativeName>
</protein>